<comment type="function">
    <text evidence="1">Catalyzes the conversion of dihydroorotate to orotate with quinone as electron acceptor.</text>
</comment>
<comment type="catalytic activity">
    <reaction evidence="1">
        <text>(S)-dihydroorotate + a quinone = orotate + a quinol</text>
        <dbReference type="Rhea" id="RHEA:30187"/>
        <dbReference type="ChEBI" id="CHEBI:24646"/>
        <dbReference type="ChEBI" id="CHEBI:30839"/>
        <dbReference type="ChEBI" id="CHEBI:30864"/>
        <dbReference type="ChEBI" id="CHEBI:132124"/>
        <dbReference type="EC" id="1.3.5.2"/>
    </reaction>
</comment>
<comment type="cofactor">
    <cofactor evidence="1">
        <name>FMN</name>
        <dbReference type="ChEBI" id="CHEBI:58210"/>
    </cofactor>
    <text evidence="1">Binds 1 FMN per subunit.</text>
</comment>
<comment type="pathway">
    <text evidence="1">Pyrimidine metabolism; UMP biosynthesis via de novo pathway; orotate from (S)-dihydroorotate (quinone route): step 1/1.</text>
</comment>
<comment type="subunit">
    <text evidence="1">Monomer.</text>
</comment>
<comment type="subcellular location">
    <subcellularLocation>
        <location evidence="1">Cell membrane</location>
        <topology evidence="1">Peripheral membrane protein</topology>
    </subcellularLocation>
</comment>
<comment type="similarity">
    <text evidence="1">Belongs to the dihydroorotate dehydrogenase family. Type 2 subfamily.</text>
</comment>
<organism>
    <name type="scientific">Xanthomonas oryzae pv. oryzae (strain PXO99A)</name>
    <dbReference type="NCBI Taxonomy" id="360094"/>
    <lineage>
        <taxon>Bacteria</taxon>
        <taxon>Pseudomonadati</taxon>
        <taxon>Pseudomonadota</taxon>
        <taxon>Gammaproteobacteria</taxon>
        <taxon>Lysobacterales</taxon>
        <taxon>Lysobacteraceae</taxon>
        <taxon>Xanthomonas</taxon>
    </lineage>
</organism>
<evidence type="ECO:0000255" key="1">
    <source>
        <dbReference type="HAMAP-Rule" id="MF_00225"/>
    </source>
</evidence>
<sequence length="351" mass="37470">MYSLARPLLFSLDAERAHALALRSIDTAYRTGTTSLLSTRPVPLPTPAFGLMFPNPVGLGAGLDKNGEHIDALLALGFGFVEIGTVTPRAQDGNPKPRMFRLPEYQAVINRMGFNNLGVDALVANVQRARRRGGLLGINIGKNKDTPNEEATSDYRYCMERVYPLADYITVNISSPNTAGLRELQEEQSLRRLISDLRETQEALGAQHGKRVPMLVKVAPDLNDRDIDAAARVLADLAVDGVIATNTTVTRPLIANHPLAAEAGGLSGAPLLGQSTLVLRRLRARLPESIPLIGVGGINSGADAVAKMAAGASLVQCYSGLVYRGPQLVGECVNAIRRRREAPSSGAVAPL</sequence>
<reference key="1">
    <citation type="journal article" date="2008" name="BMC Genomics">
        <title>Genome sequence and rapid evolution of the rice pathogen Xanthomonas oryzae pv. oryzae PXO99A.</title>
        <authorList>
            <person name="Salzberg S.L."/>
            <person name="Sommer D.D."/>
            <person name="Schatz M.C."/>
            <person name="Phillippy A.M."/>
            <person name="Rabinowicz P.D."/>
            <person name="Tsuge S."/>
            <person name="Furutani A."/>
            <person name="Ochiai H."/>
            <person name="Delcher A.L."/>
            <person name="Kelley D."/>
            <person name="Madupu R."/>
            <person name="Puiu D."/>
            <person name="Radune D."/>
            <person name="Shumway M."/>
            <person name="Trapnell C."/>
            <person name="Aparna G."/>
            <person name="Jha G."/>
            <person name="Pandey A."/>
            <person name="Patil P.B."/>
            <person name="Ishihara H."/>
            <person name="Meyer D.F."/>
            <person name="Szurek B."/>
            <person name="Verdier V."/>
            <person name="Koebnik R."/>
            <person name="Dow J.M."/>
            <person name="Ryan R.P."/>
            <person name="Hirata H."/>
            <person name="Tsuyumu S."/>
            <person name="Won Lee S."/>
            <person name="Seo Y.-S."/>
            <person name="Sriariyanum M."/>
            <person name="Ronald P.C."/>
            <person name="Sonti R.V."/>
            <person name="Van Sluys M.-A."/>
            <person name="Leach J.E."/>
            <person name="White F.F."/>
            <person name="Bogdanove A.J."/>
        </authorList>
    </citation>
    <scope>NUCLEOTIDE SEQUENCE [LARGE SCALE GENOMIC DNA]</scope>
    <source>
        <strain>PXO99A</strain>
    </source>
</reference>
<feature type="chain" id="PRO_1000100296" description="Dihydroorotate dehydrogenase (quinone)">
    <location>
        <begin position="1"/>
        <end position="351"/>
    </location>
</feature>
<feature type="active site" description="Nucleophile" evidence="1">
    <location>
        <position position="175"/>
    </location>
</feature>
<feature type="binding site" evidence="1">
    <location>
        <begin position="61"/>
        <end position="65"/>
    </location>
    <ligand>
        <name>FMN</name>
        <dbReference type="ChEBI" id="CHEBI:58210"/>
    </ligand>
</feature>
<feature type="binding site" evidence="1">
    <location>
        <position position="65"/>
    </location>
    <ligand>
        <name>substrate</name>
    </ligand>
</feature>
<feature type="binding site" evidence="1">
    <location>
        <position position="85"/>
    </location>
    <ligand>
        <name>FMN</name>
        <dbReference type="ChEBI" id="CHEBI:58210"/>
    </ligand>
</feature>
<feature type="binding site" evidence="1">
    <location>
        <begin position="110"/>
        <end position="114"/>
    </location>
    <ligand>
        <name>substrate</name>
    </ligand>
</feature>
<feature type="binding site" evidence="1">
    <location>
        <position position="139"/>
    </location>
    <ligand>
        <name>FMN</name>
        <dbReference type="ChEBI" id="CHEBI:58210"/>
    </ligand>
</feature>
<feature type="binding site" evidence="1">
    <location>
        <position position="172"/>
    </location>
    <ligand>
        <name>FMN</name>
        <dbReference type="ChEBI" id="CHEBI:58210"/>
    </ligand>
</feature>
<feature type="binding site" evidence="1">
    <location>
        <position position="172"/>
    </location>
    <ligand>
        <name>substrate</name>
    </ligand>
</feature>
<feature type="binding site" evidence="1">
    <location>
        <position position="177"/>
    </location>
    <ligand>
        <name>substrate</name>
    </ligand>
</feature>
<feature type="binding site" evidence="1">
    <location>
        <position position="217"/>
    </location>
    <ligand>
        <name>FMN</name>
        <dbReference type="ChEBI" id="CHEBI:58210"/>
    </ligand>
</feature>
<feature type="binding site" evidence="1">
    <location>
        <position position="245"/>
    </location>
    <ligand>
        <name>FMN</name>
        <dbReference type="ChEBI" id="CHEBI:58210"/>
    </ligand>
</feature>
<feature type="binding site" evidence="1">
    <location>
        <begin position="246"/>
        <end position="247"/>
    </location>
    <ligand>
        <name>substrate</name>
    </ligand>
</feature>
<feature type="binding site" evidence="1">
    <location>
        <position position="268"/>
    </location>
    <ligand>
        <name>FMN</name>
        <dbReference type="ChEBI" id="CHEBI:58210"/>
    </ligand>
</feature>
<feature type="binding site" evidence="1">
    <location>
        <position position="297"/>
    </location>
    <ligand>
        <name>FMN</name>
        <dbReference type="ChEBI" id="CHEBI:58210"/>
    </ligand>
</feature>
<feature type="binding site" evidence="1">
    <location>
        <begin position="318"/>
        <end position="319"/>
    </location>
    <ligand>
        <name>FMN</name>
        <dbReference type="ChEBI" id="CHEBI:58210"/>
    </ligand>
</feature>
<dbReference type="EC" id="1.3.5.2" evidence="1"/>
<dbReference type="EMBL" id="CP000967">
    <property type="protein sequence ID" value="ACD58981.1"/>
    <property type="molecule type" value="Genomic_DNA"/>
</dbReference>
<dbReference type="RefSeq" id="WP_012444965.1">
    <property type="nucleotide sequence ID" value="NC_010717.2"/>
</dbReference>
<dbReference type="SMR" id="B2SLB9"/>
<dbReference type="KEGG" id="xop:PXO_00808"/>
<dbReference type="eggNOG" id="COG0167">
    <property type="taxonomic scope" value="Bacteria"/>
</dbReference>
<dbReference type="HOGENOM" id="CLU_013640_2_0_6"/>
<dbReference type="UniPathway" id="UPA00070">
    <property type="reaction ID" value="UER00946"/>
</dbReference>
<dbReference type="Proteomes" id="UP000001740">
    <property type="component" value="Chromosome"/>
</dbReference>
<dbReference type="GO" id="GO:0005737">
    <property type="term" value="C:cytoplasm"/>
    <property type="evidence" value="ECO:0007669"/>
    <property type="project" value="InterPro"/>
</dbReference>
<dbReference type="GO" id="GO:0005886">
    <property type="term" value="C:plasma membrane"/>
    <property type="evidence" value="ECO:0007669"/>
    <property type="project" value="UniProtKB-SubCell"/>
</dbReference>
<dbReference type="GO" id="GO:0106430">
    <property type="term" value="F:dihydroorotate dehydrogenase (quinone) activity"/>
    <property type="evidence" value="ECO:0007669"/>
    <property type="project" value="UniProtKB-EC"/>
</dbReference>
<dbReference type="GO" id="GO:0006207">
    <property type="term" value="P:'de novo' pyrimidine nucleobase biosynthetic process"/>
    <property type="evidence" value="ECO:0007669"/>
    <property type="project" value="InterPro"/>
</dbReference>
<dbReference type="GO" id="GO:0044205">
    <property type="term" value="P:'de novo' UMP biosynthetic process"/>
    <property type="evidence" value="ECO:0007669"/>
    <property type="project" value="UniProtKB-UniRule"/>
</dbReference>
<dbReference type="CDD" id="cd04738">
    <property type="entry name" value="DHOD_2_like"/>
    <property type="match status" value="1"/>
</dbReference>
<dbReference type="FunFam" id="3.20.20.70:FF:000028">
    <property type="entry name" value="Dihydroorotate dehydrogenase (quinone)"/>
    <property type="match status" value="1"/>
</dbReference>
<dbReference type="Gene3D" id="3.20.20.70">
    <property type="entry name" value="Aldolase class I"/>
    <property type="match status" value="1"/>
</dbReference>
<dbReference type="HAMAP" id="MF_00225">
    <property type="entry name" value="DHO_dh_type2"/>
    <property type="match status" value="1"/>
</dbReference>
<dbReference type="InterPro" id="IPR013785">
    <property type="entry name" value="Aldolase_TIM"/>
</dbReference>
<dbReference type="InterPro" id="IPR050074">
    <property type="entry name" value="DHO_dehydrogenase"/>
</dbReference>
<dbReference type="InterPro" id="IPR012135">
    <property type="entry name" value="Dihydroorotate_DH_1_2"/>
</dbReference>
<dbReference type="InterPro" id="IPR005719">
    <property type="entry name" value="Dihydroorotate_DH_2"/>
</dbReference>
<dbReference type="InterPro" id="IPR005720">
    <property type="entry name" value="Dihydroorotate_DH_cat"/>
</dbReference>
<dbReference type="InterPro" id="IPR001295">
    <property type="entry name" value="Dihydroorotate_DH_CS"/>
</dbReference>
<dbReference type="NCBIfam" id="NF003644">
    <property type="entry name" value="PRK05286.1-1"/>
    <property type="match status" value="1"/>
</dbReference>
<dbReference type="NCBIfam" id="NF003645">
    <property type="entry name" value="PRK05286.1-2"/>
    <property type="match status" value="1"/>
</dbReference>
<dbReference type="NCBIfam" id="NF003646">
    <property type="entry name" value="PRK05286.1-4"/>
    <property type="match status" value="1"/>
</dbReference>
<dbReference type="NCBIfam" id="NF003652">
    <property type="entry name" value="PRK05286.2-5"/>
    <property type="match status" value="1"/>
</dbReference>
<dbReference type="NCBIfam" id="TIGR01036">
    <property type="entry name" value="pyrD_sub2"/>
    <property type="match status" value="1"/>
</dbReference>
<dbReference type="PANTHER" id="PTHR48109:SF4">
    <property type="entry name" value="DIHYDROOROTATE DEHYDROGENASE (QUINONE), MITOCHONDRIAL"/>
    <property type="match status" value="1"/>
</dbReference>
<dbReference type="PANTHER" id="PTHR48109">
    <property type="entry name" value="DIHYDROOROTATE DEHYDROGENASE (QUINONE), MITOCHONDRIAL-RELATED"/>
    <property type="match status" value="1"/>
</dbReference>
<dbReference type="Pfam" id="PF01180">
    <property type="entry name" value="DHO_dh"/>
    <property type="match status" value="1"/>
</dbReference>
<dbReference type="PIRSF" id="PIRSF000164">
    <property type="entry name" value="DHO_oxidase"/>
    <property type="match status" value="1"/>
</dbReference>
<dbReference type="SUPFAM" id="SSF51395">
    <property type="entry name" value="FMN-linked oxidoreductases"/>
    <property type="match status" value="1"/>
</dbReference>
<dbReference type="PROSITE" id="PS00911">
    <property type="entry name" value="DHODEHASE_1"/>
    <property type="match status" value="1"/>
</dbReference>
<dbReference type="PROSITE" id="PS00912">
    <property type="entry name" value="DHODEHASE_2"/>
    <property type="match status" value="1"/>
</dbReference>
<name>PYRD_XANOP</name>
<protein>
    <recommendedName>
        <fullName evidence="1">Dihydroorotate dehydrogenase (quinone)</fullName>
        <ecNumber evidence="1">1.3.5.2</ecNumber>
    </recommendedName>
    <alternativeName>
        <fullName evidence="1">DHOdehase</fullName>
        <shortName evidence="1">DHOD</shortName>
        <shortName evidence="1">DHODase</shortName>
    </alternativeName>
    <alternativeName>
        <fullName evidence="1">Dihydroorotate oxidase</fullName>
    </alternativeName>
</protein>
<accession>B2SLB9</accession>
<gene>
    <name evidence="1" type="primary">pyrD</name>
    <name type="ordered locus">PXO_00808</name>
</gene>
<proteinExistence type="inferred from homology"/>
<keyword id="KW-1003">Cell membrane</keyword>
<keyword id="KW-0285">Flavoprotein</keyword>
<keyword id="KW-0288">FMN</keyword>
<keyword id="KW-0472">Membrane</keyword>
<keyword id="KW-0560">Oxidoreductase</keyword>
<keyword id="KW-0665">Pyrimidine biosynthesis</keyword>